<feature type="chain" id="PRO_0000241830" description="UPF0178 protein YaiI">
    <location>
        <begin position="1"/>
        <end position="152"/>
    </location>
</feature>
<protein>
    <recommendedName>
        <fullName evidence="1">UPF0178 protein YaiI</fullName>
    </recommendedName>
</protein>
<dbReference type="EMBL" id="CP000036">
    <property type="protein sequence ID" value="ABB64996.1"/>
    <property type="status" value="ALT_INIT"/>
    <property type="molecule type" value="Genomic_DNA"/>
</dbReference>
<dbReference type="RefSeq" id="WP_000158159.1">
    <property type="nucleotide sequence ID" value="NC_007613.1"/>
</dbReference>
<dbReference type="KEGG" id="sbo:SBO_0281"/>
<dbReference type="HOGENOM" id="CLU_106619_1_0_6"/>
<dbReference type="Proteomes" id="UP000007067">
    <property type="component" value="Chromosome"/>
</dbReference>
<dbReference type="CDD" id="cd18720">
    <property type="entry name" value="PIN_YqxD-like"/>
    <property type="match status" value="1"/>
</dbReference>
<dbReference type="HAMAP" id="MF_00489">
    <property type="entry name" value="UPF0178"/>
    <property type="match status" value="1"/>
</dbReference>
<dbReference type="InterPro" id="IPR003791">
    <property type="entry name" value="UPF0178"/>
</dbReference>
<dbReference type="NCBIfam" id="NF001095">
    <property type="entry name" value="PRK00124.1"/>
    <property type="match status" value="1"/>
</dbReference>
<dbReference type="PANTHER" id="PTHR35146">
    <property type="entry name" value="UPF0178 PROTEIN YAII"/>
    <property type="match status" value="1"/>
</dbReference>
<dbReference type="PANTHER" id="PTHR35146:SF1">
    <property type="entry name" value="UPF0178 PROTEIN YAII"/>
    <property type="match status" value="1"/>
</dbReference>
<dbReference type="Pfam" id="PF02639">
    <property type="entry name" value="DUF188"/>
    <property type="match status" value="1"/>
</dbReference>
<proteinExistence type="inferred from homology"/>
<evidence type="ECO:0000255" key="1">
    <source>
        <dbReference type="HAMAP-Rule" id="MF_00489"/>
    </source>
</evidence>
<evidence type="ECO:0000305" key="2"/>
<accession>Q325L1</accession>
<name>YAII_SHIBS</name>
<reference key="1">
    <citation type="journal article" date="2005" name="Nucleic Acids Res.">
        <title>Genome dynamics and diversity of Shigella species, the etiologic agents of bacillary dysentery.</title>
        <authorList>
            <person name="Yang F."/>
            <person name="Yang J."/>
            <person name="Zhang X."/>
            <person name="Chen L."/>
            <person name="Jiang Y."/>
            <person name="Yan Y."/>
            <person name="Tang X."/>
            <person name="Wang J."/>
            <person name="Xiong Z."/>
            <person name="Dong J."/>
            <person name="Xue Y."/>
            <person name="Zhu Y."/>
            <person name="Xu X."/>
            <person name="Sun L."/>
            <person name="Chen S."/>
            <person name="Nie H."/>
            <person name="Peng J."/>
            <person name="Xu J."/>
            <person name="Wang Y."/>
            <person name="Yuan Z."/>
            <person name="Wen Y."/>
            <person name="Yao Z."/>
            <person name="Shen Y."/>
            <person name="Qiang B."/>
            <person name="Hou Y."/>
            <person name="Yu J."/>
            <person name="Jin Q."/>
        </authorList>
    </citation>
    <scope>NUCLEOTIDE SEQUENCE [LARGE SCALE GENOMIC DNA]</scope>
    <source>
        <strain>Sb227</strain>
    </source>
</reference>
<gene>
    <name evidence="1" type="primary">yaiI</name>
    <name type="ordered locus">SBO_0281</name>
</gene>
<organism>
    <name type="scientific">Shigella boydii serotype 4 (strain Sb227)</name>
    <dbReference type="NCBI Taxonomy" id="300268"/>
    <lineage>
        <taxon>Bacteria</taxon>
        <taxon>Pseudomonadati</taxon>
        <taxon>Pseudomonadota</taxon>
        <taxon>Gammaproteobacteria</taxon>
        <taxon>Enterobacterales</taxon>
        <taxon>Enterobacteriaceae</taxon>
        <taxon>Shigella</taxon>
    </lineage>
</organism>
<comment type="similarity">
    <text evidence="1">Belongs to the UPF0178 family.</text>
</comment>
<comment type="sequence caution" evidence="2">
    <conflict type="erroneous initiation">
        <sequence resource="EMBL-CDS" id="ABB64996"/>
    </conflict>
</comment>
<sequence length="152" mass="16969">MTIWVDADACPNVIKEILYRAAERMQMPLVLVANQSLRVPPSRFIRTLRVAAGFDVADNEIVRQCEAGDLVITADIPLAAEAIEKGAAALNPRGERYTPATIRERLTMRDFMDTLRASGIQTGGPDSLSQRDRQAFAAELEKWWLEVQRSRG</sequence>